<dbReference type="EMBL" id="AK019639">
    <property type="protein sequence ID" value="BAB31821.1"/>
    <property type="molecule type" value="mRNA"/>
</dbReference>
<dbReference type="EMBL" id="AK085347">
    <property type="protein sequence ID" value="BAC39428.1"/>
    <property type="molecule type" value="mRNA"/>
</dbReference>
<dbReference type="EMBL" id="AL603745">
    <property type="status" value="NOT_ANNOTATED_CDS"/>
    <property type="molecule type" value="Genomic_DNA"/>
</dbReference>
<dbReference type="EMBL" id="BC120835">
    <property type="protein sequence ID" value="AAI20836.1"/>
    <property type="molecule type" value="mRNA"/>
</dbReference>
<dbReference type="CCDS" id="CCDS25151.1">
    <molecule id="Q9D2H8-1"/>
</dbReference>
<dbReference type="RefSeq" id="NP_084500.1">
    <molecule id="Q9D2H8-1"/>
    <property type="nucleotide sequence ID" value="NM_030224.1"/>
</dbReference>
<dbReference type="FunCoup" id="Q9D2H8">
    <property type="interactions" value="18"/>
</dbReference>
<dbReference type="STRING" id="10090.ENSMUSP00000018988"/>
<dbReference type="iPTMnet" id="Q9D2H8"/>
<dbReference type="PhosphoSitePlus" id="Q9D2H8"/>
<dbReference type="PaxDb" id="10090-ENSMUSP00000018988"/>
<dbReference type="ProteomicsDB" id="267608">
    <molecule id="Q9D2H8-1"/>
</dbReference>
<dbReference type="ProteomicsDB" id="267609">
    <molecule id="Q9D2H8-2"/>
</dbReference>
<dbReference type="Antibodypedia" id="15564">
    <property type="antibodies" value="177 antibodies from 18 providers"/>
</dbReference>
<dbReference type="Ensembl" id="ENSMUST00000018988.6">
    <molecule id="Q9D2H8-1"/>
    <property type="protein sequence ID" value="ENSMUSP00000018988.6"/>
    <property type="gene ID" value="ENSMUSG00000018844.7"/>
</dbReference>
<dbReference type="GeneID" id="78919"/>
<dbReference type="KEGG" id="mmu:78919"/>
<dbReference type="UCSC" id="uc007knr.1">
    <molecule id="Q9D2H8-1"/>
    <property type="organism name" value="mouse"/>
</dbReference>
<dbReference type="AGR" id="MGI:1926169"/>
<dbReference type="CTD" id="54752"/>
<dbReference type="MGI" id="MGI:1926169">
    <property type="gene designation" value="Fndc8"/>
</dbReference>
<dbReference type="VEuPathDB" id="HostDB:ENSMUSG00000018844"/>
<dbReference type="eggNOG" id="ENOG502STU7">
    <property type="taxonomic scope" value="Eukaryota"/>
</dbReference>
<dbReference type="GeneTree" id="ENSGT00390000006458"/>
<dbReference type="HOGENOM" id="CLU_075088_0_0_1"/>
<dbReference type="InParanoid" id="Q9D2H8"/>
<dbReference type="OMA" id="TYAVGKQ"/>
<dbReference type="OrthoDB" id="9448151at2759"/>
<dbReference type="PhylomeDB" id="Q9D2H8"/>
<dbReference type="TreeFam" id="TF338149"/>
<dbReference type="BioGRID-ORCS" id="78919">
    <property type="hits" value="3 hits in 79 CRISPR screens"/>
</dbReference>
<dbReference type="PRO" id="PR:Q9D2H8"/>
<dbReference type="Proteomes" id="UP000000589">
    <property type="component" value="Chromosome 11"/>
</dbReference>
<dbReference type="RNAct" id="Q9D2H8">
    <property type="molecule type" value="protein"/>
</dbReference>
<dbReference type="Bgee" id="ENSMUSG00000018844">
    <property type="expression patterns" value="Expressed in seminiferous tubule of testis and 30 other cell types or tissues"/>
</dbReference>
<dbReference type="ExpressionAtlas" id="Q9D2H8">
    <property type="expression patterns" value="baseline and differential"/>
</dbReference>
<dbReference type="CDD" id="cd00063">
    <property type="entry name" value="FN3"/>
    <property type="match status" value="1"/>
</dbReference>
<dbReference type="Gene3D" id="2.60.40.10">
    <property type="entry name" value="Immunoglobulins"/>
    <property type="match status" value="1"/>
</dbReference>
<dbReference type="InterPro" id="IPR003961">
    <property type="entry name" value="FN3_dom"/>
</dbReference>
<dbReference type="InterPro" id="IPR036116">
    <property type="entry name" value="FN3_sf"/>
</dbReference>
<dbReference type="InterPro" id="IPR013783">
    <property type="entry name" value="Ig-like_fold"/>
</dbReference>
<dbReference type="PANTHER" id="PTHR32430">
    <property type="entry name" value="FIBRONECTIN TYPE III DOMAIN-CONTAINING PROTEIN 8"/>
    <property type="match status" value="1"/>
</dbReference>
<dbReference type="PANTHER" id="PTHR32430:SF1">
    <property type="entry name" value="FIBRONECTIN TYPE III DOMAIN-CONTAINING PROTEIN 8"/>
    <property type="match status" value="1"/>
</dbReference>
<dbReference type="Pfam" id="PF00041">
    <property type="entry name" value="fn3"/>
    <property type="match status" value="1"/>
</dbReference>
<dbReference type="SUPFAM" id="SSF49265">
    <property type="entry name" value="Fibronectin type III"/>
    <property type="match status" value="1"/>
</dbReference>
<dbReference type="PROSITE" id="PS50853">
    <property type="entry name" value="FN3"/>
    <property type="match status" value="1"/>
</dbReference>
<organism>
    <name type="scientific">Mus musculus</name>
    <name type="common">Mouse</name>
    <dbReference type="NCBI Taxonomy" id="10090"/>
    <lineage>
        <taxon>Eukaryota</taxon>
        <taxon>Metazoa</taxon>
        <taxon>Chordata</taxon>
        <taxon>Craniata</taxon>
        <taxon>Vertebrata</taxon>
        <taxon>Euteleostomi</taxon>
        <taxon>Mammalia</taxon>
        <taxon>Eutheria</taxon>
        <taxon>Euarchontoglires</taxon>
        <taxon>Glires</taxon>
        <taxon>Rodentia</taxon>
        <taxon>Myomorpha</taxon>
        <taxon>Muroidea</taxon>
        <taxon>Muridae</taxon>
        <taxon>Murinae</taxon>
        <taxon>Mus</taxon>
        <taxon>Mus</taxon>
    </lineage>
</organism>
<reference key="1">
    <citation type="journal article" date="2005" name="Science">
        <title>The transcriptional landscape of the mammalian genome.</title>
        <authorList>
            <person name="Carninci P."/>
            <person name="Kasukawa T."/>
            <person name="Katayama S."/>
            <person name="Gough J."/>
            <person name="Frith M.C."/>
            <person name="Maeda N."/>
            <person name="Oyama R."/>
            <person name="Ravasi T."/>
            <person name="Lenhard B."/>
            <person name="Wells C."/>
            <person name="Kodzius R."/>
            <person name="Shimokawa K."/>
            <person name="Bajic V.B."/>
            <person name="Brenner S.E."/>
            <person name="Batalov S."/>
            <person name="Forrest A.R."/>
            <person name="Zavolan M."/>
            <person name="Davis M.J."/>
            <person name="Wilming L.G."/>
            <person name="Aidinis V."/>
            <person name="Allen J.E."/>
            <person name="Ambesi-Impiombato A."/>
            <person name="Apweiler R."/>
            <person name="Aturaliya R.N."/>
            <person name="Bailey T.L."/>
            <person name="Bansal M."/>
            <person name="Baxter L."/>
            <person name="Beisel K.W."/>
            <person name="Bersano T."/>
            <person name="Bono H."/>
            <person name="Chalk A.M."/>
            <person name="Chiu K.P."/>
            <person name="Choudhary V."/>
            <person name="Christoffels A."/>
            <person name="Clutterbuck D.R."/>
            <person name="Crowe M.L."/>
            <person name="Dalla E."/>
            <person name="Dalrymple B.P."/>
            <person name="de Bono B."/>
            <person name="Della Gatta G."/>
            <person name="di Bernardo D."/>
            <person name="Down T."/>
            <person name="Engstrom P."/>
            <person name="Fagiolini M."/>
            <person name="Faulkner G."/>
            <person name="Fletcher C.F."/>
            <person name="Fukushima T."/>
            <person name="Furuno M."/>
            <person name="Futaki S."/>
            <person name="Gariboldi M."/>
            <person name="Georgii-Hemming P."/>
            <person name="Gingeras T.R."/>
            <person name="Gojobori T."/>
            <person name="Green R.E."/>
            <person name="Gustincich S."/>
            <person name="Harbers M."/>
            <person name="Hayashi Y."/>
            <person name="Hensch T.K."/>
            <person name="Hirokawa N."/>
            <person name="Hill D."/>
            <person name="Huminiecki L."/>
            <person name="Iacono M."/>
            <person name="Ikeo K."/>
            <person name="Iwama A."/>
            <person name="Ishikawa T."/>
            <person name="Jakt M."/>
            <person name="Kanapin A."/>
            <person name="Katoh M."/>
            <person name="Kawasawa Y."/>
            <person name="Kelso J."/>
            <person name="Kitamura H."/>
            <person name="Kitano H."/>
            <person name="Kollias G."/>
            <person name="Krishnan S.P."/>
            <person name="Kruger A."/>
            <person name="Kummerfeld S.K."/>
            <person name="Kurochkin I.V."/>
            <person name="Lareau L.F."/>
            <person name="Lazarevic D."/>
            <person name="Lipovich L."/>
            <person name="Liu J."/>
            <person name="Liuni S."/>
            <person name="McWilliam S."/>
            <person name="Madan Babu M."/>
            <person name="Madera M."/>
            <person name="Marchionni L."/>
            <person name="Matsuda H."/>
            <person name="Matsuzawa S."/>
            <person name="Miki H."/>
            <person name="Mignone F."/>
            <person name="Miyake S."/>
            <person name="Morris K."/>
            <person name="Mottagui-Tabar S."/>
            <person name="Mulder N."/>
            <person name="Nakano N."/>
            <person name="Nakauchi H."/>
            <person name="Ng P."/>
            <person name="Nilsson R."/>
            <person name="Nishiguchi S."/>
            <person name="Nishikawa S."/>
            <person name="Nori F."/>
            <person name="Ohara O."/>
            <person name="Okazaki Y."/>
            <person name="Orlando V."/>
            <person name="Pang K.C."/>
            <person name="Pavan W.J."/>
            <person name="Pavesi G."/>
            <person name="Pesole G."/>
            <person name="Petrovsky N."/>
            <person name="Piazza S."/>
            <person name="Reed J."/>
            <person name="Reid J.F."/>
            <person name="Ring B.Z."/>
            <person name="Ringwald M."/>
            <person name="Rost B."/>
            <person name="Ruan Y."/>
            <person name="Salzberg S.L."/>
            <person name="Sandelin A."/>
            <person name="Schneider C."/>
            <person name="Schoenbach C."/>
            <person name="Sekiguchi K."/>
            <person name="Semple C.A."/>
            <person name="Seno S."/>
            <person name="Sessa L."/>
            <person name="Sheng Y."/>
            <person name="Shibata Y."/>
            <person name="Shimada H."/>
            <person name="Shimada K."/>
            <person name="Silva D."/>
            <person name="Sinclair B."/>
            <person name="Sperling S."/>
            <person name="Stupka E."/>
            <person name="Sugiura K."/>
            <person name="Sultana R."/>
            <person name="Takenaka Y."/>
            <person name="Taki K."/>
            <person name="Tammoja K."/>
            <person name="Tan S.L."/>
            <person name="Tang S."/>
            <person name="Taylor M.S."/>
            <person name="Tegner J."/>
            <person name="Teichmann S.A."/>
            <person name="Ueda H.R."/>
            <person name="van Nimwegen E."/>
            <person name="Verardo R."/>
            <person name="Wei C.L."/>
            <person name="Yagi K."/>
            <person name="Yamanishi H."/>
            <person name="Zabarovsky E."/>
            <person name="Zhu S."/>
            <person name="Zimmer A."/>
            <person name="Hide W."/>
            <person name="Bult C."/>
            <person name="Grimmond S.M."/>
            <person name="Teasdale R.D."/>
            <person name="Liu E.T."/>
            <person name="Brusic V."/>
            <person name="Quackenbush J."/>
            <person name="Wahlestedt C."/>
            <person name="Mattick J.S."/>
            <person name="Hume D.A."/>
            <person name="Kai C."/>
            <person name="Sasaki D."/>
            <person name="Tomaru Y."/>
            <person name="Fukuda S."/>
            <person name="Kanamori-Katayama M."/>
            <person name="Suzuki M."/>
            <person name="Aoki J."/>
            <person name="Arakawa T."/>
            <person name="Iida J."/>
            <person name="Imamura K."/>
            <person name="Itoh M."/>
            <person name="Kato T."/>
            <person name="Kawaji H."/>
            <person name="Kawagashira N."/>
            <person name="Kawashima T."/>
            <person name="Kojima M."/>
            <person name="Kondo S."/>
            <person name="Konno H."/>
            <person name="Nakano K."/>
            <person name="Ninomiya N."/>
            <person name="Nishio T."/>
            <person name="Okada M."/>
            <person name="Plessy C."/>
            <person name="Shibata K."/>
            <person name="Shiraki T."/>
            <person name="Suzuki S."/>
            <person name="Tagami M."/>
            <person name="Waki K."/>
            <person name="Watahiki A."/>
            <person name="Okamura-Oho Y."/>
            <person name="Suzuki H."/>
            <person name="Kawai J."/>
            <person name="Hayashizaki Y."/>
        </authorList>
    </citation>
    <scope>NUCLEOTIDE SEQUENCE [LARGE SCALE MRNA] (ISOFORMS 1 AND 2)</scope>
    <source>
        <strain>C57BL/6J</strain>
        <tissue>Kidney</tissue>
        <tissue>Testis</tissue>
    </source>
</reference>
<reference key="2">
    <citation type="journal article" date="2009" name="PLoS Biol.">
        <title>Lineage-specific biology revealed by a finished genome assembly of the mouse.</title>
        <authorList>
            <person name="Church D.M."/>
            <person name="Goodstadt L."/>
            <person name="Hillier L.W."/>
            <person name="Zody M.C."/>
            <person name="Goldstein S."/>
            <person name="She X."/>
            <person name="Bult C.J."/>
            <person name="Agarwala R."/>
            <person name="Cherry J.L."/>
            <person name="DiCuccio M."/>
            <person name="Hlavina W."/>
            <person name="Kapustin Y."/>
            <person name="Meric P."/>
            <person name="Maglott D."/>
            <person name="Birtle Z."/>
            <person name="Marques A.C."/>
            <person name="Graves T."/>
            <person name="Zhou S."/>
            <person name="Teague B."/>
            <person name="Potamousis K."/>
            <person name="Churas C."/>
            <person name="Place M."/>
            <person name="Herschleb J."/>
            <person name="Runnheim R."/>
            <person name="Forrest D."/>
            <person name="Amos-Landgraf J."/>
            <person name="Schwartz D.C."/>
            <person name="Cheng Z."/>
            <person name="Lindblad-Toh K."/>
            <person name="Eichler E.E."/>
            <person name="Ponting C.P."/>
        </authorList>
    </citation>
    <scope>NUCLEOTIDE SEQUENCE [LARGE SCALE GENOMIC DNA]</scope>
    <source>
        <strain>C57BL/6J</strain>
    </source>
</reference>
<reference key="3">
    <citation type="journal article" date="2004" name="Genome Res.">
        <title>The status, quality, and expansion of the NIH full-length cDNA project: the Mammalian Gene Collection (MGC).</title>
        <authorList>
            <consortium name="The MGC Project Team"/>
        </authorList>
    </citation>
    <scope>NUCLEOTIDE SEQUENCE [LARGE SCALE MRNA] (ISOFORM 1)</scope>
    <source>
        <tissue>Testis</tissue>
    </source>
</reference>
<name>FNDC8_MOUSE</name>
<comment type="alternative products">
    <event type="alternative splicing"/>
    <isoform>
        <id>Q9D2H8-1</id>
        <name>1</name>
        <sequence type="displayed"/>
    </isoform>
    <isoform>
        <id>Q9D2H8-2</id>
        <name>2</name>
        <sequence type="described" ref="VSP_024559"/>
    </isoform>
</comment>
<gene>
    <name type="primary">Fndc8</name>
</gene>
<keyword id="KW-0025">Alternative splicing</keyword>
<keyword id="KW-1185">Reference proteome</keyword>
<protein>
    <recommendedName>
        <fullName>Fibronectin type III domain-containing protein 8</fullName>
    </recommendedName>
</protein>
<evidence type="ECO:0000255" key="1">
    <source>
        <dbReference type="PROSITE-ProRule" id="PRU00316"/>
    </source>
</evidence>
<evidence type="ECO:0000303" key="2">
    <source>
    </source>
</evidence>
<evidence type="ECO:0000305" key="3"/>
<accession>Q9D2H8</accession>
<accession>Q8BUG1</accession>
<feature type="chain" id="PRO_0000284532" description="Fibronectin type III domain-containing protein 8">
    <location>
        <begin position="1"/>
        <end position="321"/>
    </location>
</feature>
<feature type="domain" description="Fibronectin type-III" evidence="1">
    <location>
        <begin position="175"/>
        <end position="277"/>
    </location>
</feature>
<feature type="splice variant" id="VSP_024559" description="In isoform 2." evidence="2">
    <location>
        <begin position="1"/>
        <end position="69"/>
    </location>
</feature>
<feature type="sequence conflict" description="In Ref. 1; BAC39428." evidence="3" ref="1">
    <original>R</original>
    <variation>P</variation>
    <location>
        <position position="228"/>
    </location>
</feature>
<proteinExistence type="evidence at transcript level"/>
<sequence>MATVFCKVGGGEEAVPKKEALNVINVIDQLPKPCPNPKFINRSMATKGLLLPSRRSLASFSEEENTDVMMHMPVEDSEYSSDDTSMSPIPSTLMNPIKMAVTQPNSSFFAGILEGELNKLSLASVVKNTEKDNLAICPRSSKSQIATRGLLDLDNPALDTDTSSTRSESSVVLDVPEVPFICEHTVGDSTAVISWTYAAGKQQVSFYQVLLQEATKPADKDTPKIKTRPWIFNKILGTTVKLMELKSNTSYCLTVRAANTAGVGKWCKPYKFATVSTDFNSFPETNPIQVTVQRKQPHRRTVSMTMEEMRRLEDLEYLYPY</sequence>